<gene>
    <name type="ordered locus">CTL0717</name>
</gene>
<accession>B0B830</accession>
<dbReference type="EMBL" id="AM884176">
    <property type="protein sequence ID" value="CAP04156.1"/>
    <property type="molecule type" value="Genomic_DNA"/>
</dbReference>
<dbReference type="RefSeq" id="WP_009873826.1">
    <property type="nucleotide sequence ID" value="NC_010287.1"/>
</dbReference>
<dbReference type="RefSeq" id="YP_001654789.1">
    <property type="nucleotide sequence ID" value="NC_010287.1"/>
</dbReference>
<dbReference type="SMR" id="B0B830"/>
<dbReference type="KEGG" id="ctb:CTL0717"/>
<dbReference type="PATRIC" id="fig|471472.4.peg.769"/>
<dbReference type="HOGENOM" id="CLU_062974_3_0_0"/>
<dbReference type="Proteomes" id="UP001154402">
    <property type="component" value="Chromosome"/>
</dbReference>
<dbReference type="GO" id="GO:0005829">
    <property type="term" value="C:cytosol"/>
    <property type="evidence" value="ECO:0007669"/>
    <property type="project" value="TreeGrafter"/>
</dbReference>
<dbReference type="GO" id="GO:0003677">
    <property type="term" value="F:DNA binding"/>
    <property type="evidence" value="ECO:0007669"/>
    <property type="project" value="UniProtKB-UniRule"/>
</dbReference>
<dbReference type="GO" id="GO:0006355">
    <property type="term" value="P:regulation of DNA-templated transcription"/>
    <property type="evidence" value="ECO:0007669"/>
    <property type="project" value="UniProtKB-UniRule"/>
</dbReference>
<dbReference type="FunFam" id="1.10.10.200:FF:000002">
    <property type="entry name" value="Probable transcriptional regulatory protein CLM62_37755"/>
    <property type="match status" value="1"/>
</dbReference>
<dbReference type="Gene3D" id="1.10.10.200">
    <property type="match status" value="1"/>
</dbReference>
<dbReference type="Gene3D" id="3.30.70.980">
    <property type="match status" value="2"/>
</dbReference>
<dbReference type="HAMAP" id="MF_00693">
    <property type="entry name" value="Transcrip_reg_TACO1"/>
    <property type="match status" value="1"/>
</dbReference>
<dbReference type="InterPro" id="IPR017856">
    <property type="entry name" value="Integrase-like_N"/>
</dbReference>
<dbReference type="InterPro" id="IPR048300">
    <property type="entry name" value="TACO1_YebC-like_2nd/3rd_dom"/>
</dbReference>
<dbReference type="InterPro" id="IPR049083">
    <property type="entry name" value="TACO1_YebC_N"/>
</dbReference>
<dbReference type="InterPro" id="IPR002876">
    <property type="entry name" value="Transcrip_reg_TACO1-like"/>
</dbReference>
<dbReference type="InterPro" id="IPR026564">
    <property type="entry name" value="Transcrip_reg_TACO1-like_dom3"/>
</dbReference>
<dbReference type="InterPro" id="IPR029072">
    <property type="entry name" value="YebC-like"/>
</dbReference>
<dbReference type="NCBIfam" id="NF001030">
    <property type="entry name" value="PRK00110.1"/>
    <property type="match status" value="1"/>
</dbReference>
<dbReference type="NCBIfam" id="NF009044">
    <property type="entry name" value="PRK12378.1"/>
    <property type="match status" value="1"/>
</dbReference>
<dbReference type="NCBIfam" id="TIGR01033">
    <property type="entry name" value="YebC/PmpR family DNA-binding transcriptional regulator"/>
    <property type="match status" value="1"/>
</dbReference>
<dbReference type="PANTHER" id="PTHR12532:SF6">
    <property type="entry name" value="TRANSCRIPTIONAL REGULATORY PROTEIN YEBC-RELATED"/>
    <property type="match status" value="1"/>
</dbReference>
<dbReference type="PANTHER" id="PTHR12532">
    <property type="entry name" value="TRANSLATIONAL ACTIVATOR OF CYTOCHROME C OXIDASE 1"/>
    <property type="match status" value="1"/>
</dbReference>
<dbReference type="Pfam" id="PF20772">
    <property type="entry name" value="TACO1_YebC_N"/>
    <property type="match status" value="1"/>
</dbReference>
<dbReference type="Pfam" id="PF01709">
    <property type="entry name" value="Transcrip_reg"/>
    <property type="match status" value="1"/>
</dbReference>
<dbReference type="SUPFAM" id="SSF75625">
    <property type="entry name" value="YebC-like"/>
    <property type="match status" value="1"/>
</dbReference>
<reference key="1">
    <citation type="journal article" date="2008" name="Genome Res.">
        <title>Chlamydia trachomatis: genome sequence analysis of lymphogranuloma venereum isolates.</title>
        <authorList>
            <person name="Thomson N.R."/>
            <person name="Holden M.T.G."/>
            <person name="Carder C."/>
            <person name="Lennard N."/>
            <person name="Lockey S.J."/>
            <person name="Marsh P."/>
            <person name="Skipp P."/>
            <person name="O'Connor C.D."/>
            <person name="Goodhead I."/>
            <person name="Norbertzcak H."/>
            <person name="Harris B."/>
            <person name="Ormond D."/>
            <person name="Rance R."/>
            <person name="Quail M.A."/>
            <person name="Parkhill J."/>
            <person name="Stephens R.S."/>
            <person name="Clarke I.N."/>
        </authorList>
    </citation>
    <scope>NUCLEOTIDE SEQUENCE [LARGE SCALE GENOMIC DNA]</scope>
    <source>
        <strain>ATCC VR-902B / DSM 19102 / 434/Bu</strain>
    </source>
</reference>
<keyword id="KW-0963">Cytoplasm</keyword>
<keyword id="KW-0238">DNA-binding</keyword>
<keyword id="KW-0804">Transcription</keyword>
<keyword id="KW-0805">Transcription regulation</keyword>
<comment type="subcellular location">
    <subcellularLocation>
        <location evidence="1">Cytoplasm</location>
    </subcellularLocation>
</comment>
<comment type="similarity">
    <text evidence="1">Belongs to the TACO1 family.</text>
</comment>
<sequence length="238" mass="26532">MAGHSKWANTKHRKERADHKKGKIFSRTIKELISAVKMGGPDPKSNARLRMIIQKAKDQNIPNENIERNLKKASSADQKNYEEVTYELYGFGGVGIIVEAMTDNKNRTASDMRVAVNKRGGALVEPGSVLYNFSRKGACYVPKHSIDEASLLTHVIDCGGEDLDSDDEEFFLVLCEPTDLASVKEALLAKGVTCSEERLIYVPLRLVDCDEETGKSNLALIEWLENIDDVDDVYHNMA</sequence>
<organism>
    <name type="scientific">Chlamydia trachomatis serovar L2 (strain ATCC VR-902B / DSM 19102 / 434/Bu)</name>
    <dbReference type="NCBI Taxonomy" id="471472"/>
    <lineage>
        <taxon>Bacteria</taxon>
        <taxon>Pseudomonadati</taxon>
        <taxon>Chlamydiota</taxon>
        <taxon>Chlamydiia</taxon>
        <taxon>Chlamydiales</taxon>
        <taxon>Chlamydiaceae</taxon>
        <taxon>Chlamydia/Chlamydophila group</taxon>
        <taxon>Chlamydia</taxon>
    </lineage>
</organism>
<evidence type="ECO:0000255" key="1">
    <source>
        <dbReference type="HAMAP-Rule" id="MF_00693"/>
    </source>
</evidence>
<evidence type="ECO:0000256" key="2">
    <source>
        <dbReference type="SAM" id="MobiDB-lite"/>
    </source>
</evidence>
<proteinExistence type="inferred from homology"/>
<protein>
    <recommendedName>
        <fullName evidence="1">Probable transcriptional regulatory protein CTL0717</fullName>
    </recommendedName>
</protein>
<feature type="chain" id="PRO_1000132171" description="Probable transcriptional regulatory protein CTL0717">
    <location>
        <begin position="1"/>
        <end position="238"/>
    </location>
</feature>
<feature type="region of interest" description="Disordered" evidence="2">
    <location>
        <begin position="1"/>
        <end position="21"/>
    </location>
</feature>
<feature type="compositionally biased region" description="Basic residues" evidence="2">
    <location>
        <begin position="9"/>
        <end position="21"/>
    </location>
</feature>
<name>Y717_CHLT2</name>